<keyword id="KW-0963">Cytoplasm</keyword>
<keyword id="KW-0238">DNA-binding</keyword>
<keyword id="KW-0240">DNA-directed RNA polymerase</keyword>
<keyword id="KW-0548">Nucleotidyltransferase</keyword>
<keyword id="KW-0804">Transcription</keyword>
<keyword id="KW-0808">Transferase</keyword>
<sequence>MVAAKTIKSLVDKADLPDNIKEELYNKLIEYNKKYKFKKAEVEAIIEETVKEYQNSLVEPGEAIGTVAAQSIGEPSTQMTLNTFHYAGVAEINVTLGLPRIIEIVDARKNPSTPIMTVYLDEKHRYDREKALEVARRIEGTTLENLAREMSIDILNFEFIVEIDPERLEKSGLDMEKIQKKLESSFKSAEFEVDGYTLIMRPKKVTKLSDLRRLSEKVKKHRLKGLSGVGKTIIRKEGDEYVIYTEGSNFKQILKVPGVDPTRTRTNNIHEIAEVLGIEAARNAIIEEIVNTMRDQGLEVDVRHIMLVADMMTLDGVILPIGRHGIVGEKASVLARAAFEITTQHLFEAAERGETDPLNGVVENVLIGQPVPVGTGIVKLAMNLPLRPKRE</sequence>
<proteinExistence type="inferred from homology"/>
<organism>
    <name type="scientific">Thermococcus onnurineus (strain NA1)</name>
    <dbReference type="NCBI Taxonomy" id="523850"/>
    <lineage>
        <taxon>Archaea</taxon>
        <taxon>Methanobacteriati</taxon>
        <taxon>Methanobacteriota</taxon>
        <taxon>Thermococci</taxon>
        <taxon>Thermococcales</taxon>
        <taxon>Thermococcaceae</taxon>
        <taxon>Thermococcus</taxon>
    </lineage>
</organism>
<protein>
    <recommendedName>
        <fullName evidence="1">DNA-directed RNA polymerase subunit Rpo1C</fullName>
        <ecNumber evidence="1">2.7.7.6</ecNumber>
    </recommendedName>
    <alternativeName>
        <fullName evidence="1">DNA-directed RNA polymerase subunit A''</fullName>
    </alternativeName>
</protein>
<evidence type="ECO:0000255" key="1">
    <source>
        <dbReference type="HAMAP-Rule" id="MF_00411"/>
    </source>
</evidence>
<dbReference type="EC" id="2.7.7.6" evidence="1"/>
<dbReference type="EMBL" id="CP000855">
    <property type="protein sequence ID" value="ACJ15704.1"/>
    <property type="molecule type" value="Genomic_DNA"/>
</dbReference>
<dbReference type="RefSeq" id="WP_012571177.1">
    <property type="nucleotide sequence ID" value="NC_011529.1"/>
</dbReference>
<dbReference type="SMR" id="B6YT17"/>
<dbReference type="STRING" id="523850.TON_0219"/>
<dbReference type="GeneID" id="7017879"/>
<dbReference type="KEGG" id="ton:TON_0219"/>
<dbReference type="PATRIC" id="fig|523850.10.peg.221"/>
<dbReference type="eggNOG" id="arCOG04256">
    <property type="taxonomic scope" value="Archaea"/>
</dbReference>
<dbReference type="HOGENOM" id="CLU_037097_1_0_2"/>
<dbReference type="OrthoDB" id="372142at2157"/>
<dbReference type="Proteomes" id="UP000002727">
    <property type="component" value="Chromosome"/>
</dbReference>
<dbReference type="GO" id="GO:0005737">
    <property type="term" value="C:cytoplasm"/>
    <property type="evidence" value="ECO:0007669"/>
    <property type="project" value="UniProtKB-SubCell"/>
</dbReference>
<dbReference type="GO" id="GO:0000428">
    <property type="term" value="C:DNA-directed RNA polymerase complex"/>
    <property type="evidence" value="ECO:0007669"/>
    <property type="project" value="UniProtKB-KW"/>
</dbReference>
<dbReference type="GO" id="GO:0003677">
    <property type="term" value="F:DNA binding"/>
    <property type="evidence" value="ECO:0007669"/>
    <property type="project" value="UniProtKB-UniRule"/>
</dbReference>
<dbReference type="GO" id="GO:0003899">
    <property type="term" value="F:DNA-directed RNA polymerase activity"/>
    <property type="evidence" value="ECO:0007669"/>
    <property type="project" value="UniProtKB-UniRule"/>
</dbReference>
<dbReference type="GO" id="GO:0006351">
    <property type="term" value="P:DNA-templated transcription"/>
    <property type="evidence" value="ECO:0007669"/>
    <property type="project" value="UniProtKB-UniRule"/>
</dbReference>
<dbReference type="CDD" id="cd06528">
    <property type="entry name" value="RNAP_A"/>
    <property type="match status" value="1"/>
</dbReference>
<dbReference type="Gene3D" id="1.10.150.390">
    <property type="match status" value="1"/>
</dbReference>
<dbReference type="HAMAP" id="MF_00411">
    <property type="entry name" value="RNApol_arch_Rpo1C"/>
    <property type="match status" value="1"/>
</dbReference>
<dbReference type="InterPro" id="IPR045867">
    <property type="entry name" value="DNA-dir_RpoC_beta_prime"/>
</dbReference>
<dbReference type="InterPro" id="IPR007081">
    <property type="entry name" value="RNA_pol_Rpb1_5"/>
</dbReference>
<dbReference type="InterPro" id="IPR012757">
    <property type="entry name" value="RPO1C"/>
</dbReference>
<dbReference type="NCBIfam" id="TIGR02389">
    <property type="entry name" value="RNA_pol_rpoA2"/>
    <property type="match status" value="1"/>
</dbReference>
<dbReference type="PANTHER" id="PTHR19376">
    <property type="entry name" value="DNA-DIRECTED RNA POLYMERASE"/>
    <property type="match status" value="1"/>
</dbReference>
<dbReference type="PANTHER" id="PTHR19376:SF32">
    <property type="entry name" value="DNA-DIRECTED RNA POLYMERASE III SUBUNIT RPC1"/>
    <property type="match status" value="1"/>
</dbReference>
<dbReference type="Pfam" id="PF04998">
    <property type="entry name" value="RNA_pol_Rpb1_5"/>
    <property type="match status" value="1"/>
</dbReference>
<dbReference type="SUPFAM" id="SSF64484">
    <property type="entry name" value="beta and beta-prime subunits of DNA dependent RNA-polymerase"/>
    <property type="match status" value="1"/>
</dbReference>
<comment type="function">
    <text evidence="1">DNA-dependent RNA polymerase (RNAP) catalyzes the transcription of DNA into RNA using the four ribonucleoside triphosphates as substrates. Forms part of the jaw domain.</text>
</comment>
<comment type="catalytic activity">
    <reaction evidence="1">
        <text>RNA(n) + a ribonucleoside 5'-triphosphate = RNA(n+1) + diphosphate</text>
        <dbReference type="Rhea" id="RHEA:21248"/>
        <dbReference type="Rhea" id="RHEA-COMP:14527"/>
        <dbReference type="Rhea" id="RHEA-COMP:17342"/>
        <dbReference type="ChEBI" id="CHEBI:33019"/>
        <dbReference type="ChEBI" id="CHEBI:61557"/>
        <dbReference type="ChEBI" id="CHEBI:140395"/>
        <dbReference type="EC" id="2.7.7.6"/>
    </reaction>
</comment>
<comment type="subunit">
    <text evidence="1">Part of the RNA polymerase complex.</text>
</comment>
<comment type="subcellular location">
    <subcellularLocation>
        <location evidence="1">Cytoplasm</location>
    </subcellularLocation>
</comment>
<comment type="similarity">
    <text evidence="1">Belongs to the RNA polymerase beta' chain family.</text>
</comment>
<reference key="1">
    <citation type="journal article" date="2008" name="J. Bacteriol.">
        <title>The complete genome sequence of Thermococcus onnurineus NA1 reveals a mixed heterotrophic and carboxydotrophic metabolism.</title>
        <authorList>
            <person name="Lee H.S."/>
            <person name="Kang S.G."/>
            <person name="Bae S.S."/>
            <person name="Lim J.K."/>
            <person name="Cho Y."/>
            <person name="Kim Y.J."/>
            <person name="Jeon J.H."/>
            <person name="Cha S.-S."/>
            <person name="Kwon K.K."/>
            <person name="Kim H.-T."/>
            <person name="Park C.-J."/>
            <person name="Lee H.-W."/>
            <person name="Kim S.I."/>
            <person name="Chun J."/>
            <person name="Colwell R.R."/>
            <person name="Kim S.-J."/>
            <person name="Lee J.-H."/>
        </authorList>
    </citation>
    <scope>NUCLEOTIDE SEQUENCE [LARGE SCALE GENOMIC DNA]</scope>
    <source>
        <strain>NA1</strain>
    </source>
</reference>
<gene>
    <name evidence="1" type="primary">rpo1C</name>
    <name evidence="1" type="synonym">rpoA2</name>
    <name type="ordered locus">TON_0219</name>
</gene>
<accession>B6YT17</accession>
<name>RPO1C_THEON</name>
<feature type="chain" id="PRO_1000194739" description="DNA-directed RNA polymerase subunit Rpo1C">
    <location>
        <begin position="1"/>
        <end position="391"/>
    </location>
</feature>